<organism>
    <name type="scientific">Burkholderia lata (strain ATCC 17760 / DSM 23089 / LMG 22485 / NCIMB 9086 / R18194 / 383)</name>
    <dbReference type="NCBI Taxonomy" id="482957"/>
    <lineage>
        <taxon>Bacteria</taxon>
        <taxon>Pseudomonadati</taxon>
        <taxon>Pseudomonadota</taxon>
        <taxon>Betaproteobacteria</taxon>
        <taxon>Burkholderiales</taxon>
        <taxon>Burkholderiaceae</taxon>
        <taxon>Burkholderia</taxon>
        <taxon>Burkholderia cepacia complex</taxon>
    </lineage>
</organism>
<gene>
    <name evidence="1" type="primary">dapD</name>
    <name type="ordered locus">Bcep18194_A5339</name>
</gene>
<dbReference type="EC" id="2.3.1.117" evidence="1"/>
<dbReference type="EMBL" id="CP000151">
    <property type="protein sequence ID" value="ABB08933.1"/>
    <property type="molecule type" value="Genomic_DNA"/>
</dbReference>
<dbReference type="RefSeq" id="WP_006478479.1">
    <property type="nucleotide sequence ID" value="NZ_WNDV01000037.1"/>
</dbReference>
<dbReference type="SMR" id="Q39F33"/>
<dbReference type="GeneID" id="93191604"/>
<dbReference type="KEGG" id="bur:Bcep18194_A5339"/>
<dbReference type="HOGENOM" id="CLU_050859_0_1_4"/>
<dbReference type="UniPathway" id="UPA00034">
    <property type="reaction ID" value="UER00019"/>
</dbReference>
<dbReference type="Proteomes" id="UP000002705">
    <property type="component" value="Chromosome 1"/>
</dbReference>
<dbReference type="GO" id="GO:0005737">
    <property type="term" value="C:cytoplasm"/>
    <property type="evidence" value="ECO:0007669"/>
    <property type="project" value="UniProtKB-SubCell"/>
</dbReference>
<dbReference type="GO" id="GO:0008666">
    <property type="term" value="F:2,3,4,5-tetrahydropyridine-2,6-dicarboxylate N-succinyltransferase activity"/>
    <property type="evidence" value="ECO:0007669"/>
    <property type="project" value="UniProtKB-UniRule"/>
</dbReference>
<dbReference type="GO" id="GO:0016779">
    <property type="term" value="F:nucleotidyltransferase activity"/>
    <property type="evidence" value="ECO:0007669"/>
    <property type="project" value="TreeGrafter"/>
</dbReference>
<dbReference type="GO" id="GO:0019877">
    <property type="term" value="P:diaminopimelate biosynthetic process"/>
    <property type="evidence" value="ECO:0007669"/>
    <property type="project" value="UniProtKB-UniRule"/>
</dbReference>
<dbReference type="GO" id="GO:0009089">
    <property type="term" value="P:lysine biosynthetic process via diaminopimelate"/>
    <property type="evidence" value="ECO:0007669"/>
    <property type="project" value="UniProtKB-UniRule"/>
</dbReference>
<dbReference type="CDD" id="cd03350">
    <property type="entry name" value="LbH_THP_succinylT"/>
    <property type="match status" value="1"/>
</dbReference>
<dbReference type="Gene3D" id="2.160.10.10">
    <property type="entry name" value="Hexapeptide repeat proteins"/>
    <property type="match status" value="1"/>
</dbReference>
<dbReference type="Gene3D" id="1.10.166.10">
    <property type="entry name" value="Tetrahydrodipicolinate-N-succinyltransferase, N-terminal domain"/>
    <property type="match status" value="1"/>
</dbReference>
<dbReference type="HAMAP" id="MF_00811">
    <property type="entry name" value="DapD"/>
    <property type="match status" value="1"/>
</dbReference>
<dbReference type="InterPro" id="IPR005664">
    <property type="entry name" value="DapD_Trfase_Hexpep_rpt_fam"/>
</dbReference>
<dbReference type="InterPro" id="IPR001451">
    <property type="entry name" value="Hexapep"/>
</dbReference>
<dbReference type="InterPro" id="IPR018357">
    <property type="entry name" value="Hexapep_transf_CS"/>
</dbReference>
<dbReference type="InterPro" id="IPR023180">
    <property type="entry name" value="THP_succinylTrfase_dom1"/>
</dbReference>
<dbReference type="InterPro" id="IPR037133">
    <property type="entry name" value="THP_succinylTrfase_N_sf"/>
</dbReference>
<dbReference type="InterPro" id="IPR011004">
    <property type="entry name" value="Trimer_LpxA-like_sf"/>
</dbReference>
<dbReference type="NCBIfam" id="TIGR00965">
    <property type="entry name" value="dapD"/>
    <property type="match status" value="1"/>
</dbReference>
<dbReference type="NCBIfam" id="NF008808">
    <property type="entry name" value="PRK11830.1"/>
    <property type="match status" value="1"/>
</dbReference>
<dbReference type="PANTHER" id="PTHR19136:SF52">
    <property type="entry name" value="2,3,4,5-TETRAHYDROPYRIDINE-2,6-DICARBOXYLATE N-SUCCINYLTRANSFERASE"/>
    <property type="match status" value="1"/>
</dbReference>
<dbReference type="PANTHER" id="PTHR19136">
    <property type="entry name" value="MOLYBDENUM COFACTOR GUANYLYLTRANSFERASE"/>
    <property type="match status" value="1"/>
</dbReference>
<dbReference type="Pfam" id="PF14602">
    <property type="entry name" value="Hexapep_2"/>
    <property type="match status" value="1"/>
</dbReference>
<dbReference type="Pfam" id="PF14805">
    <property type="entry name" value="THDPS_N_2"/>
    <property type="match status" value="1"/>
</dbReference>
<dbReference type="SUPFAM" id="SSF51161">
    <property type="entry name" value="Trimeric LpxA-like enzymes"/>
    <property type="match status" value="1"/>
</dbReference>
<dbReference type="PROSITE" id="PS00101">
    <property type="entry name" value="HEXAPEP_TRANSFERASES"/>
    <property type="match status" value="1"/>
</dbReference>
<accession>Q39F33</accession>
<evidence type="ECO:0000255" key="1">
    <source>
        <dbReference type="HAMAP-Rule" id="MF_00811"/>
    </source>
</evidence>
<sequence>MSQQLQQIIDTAWENRAELSPKAAPADVREAVAHAIEQLDKGALRVAEKIDGNWTVHQWLKKAVLLSFRLEDNAPMPAGGYSQFYDKVPSKFANYTAEDFAAGGFRVVPPAIARRGSFIAKNVVLMPSYTNIGAYVDEGTMVDTWATVGSCAQIGKNVHLSGGVGIGGVLEPLQANPVIIEDNCFIGARSEVVEGVIVEENSVISMGVYLGQSTKIYDRETGEVSYGRIPAGSVVVAGNLPSKDGSHSLYCAVIVKKVDAKTRAKVGLNELLRGD</sequence>
<feature type="chain" id="PRO_1000047132" description="2,3,4,5-tetrahydropyridine-2,6-dicarboxylate N-succinyltransferase">
    <location>
        <begin position="1"/>
        <end position="275"/>
    </location>
</feature>
<feature type="binding site" evidence="1">
    <location>
        <position position="106"/>
    </location>
    <ligand>
        <name>substrate</name>
    </ligand>
</feature>
<feature type="binding site" evidence="1">
    <location>
        <position position="143"/>
    </location>
    <ligand>
        <name>substrate</name>
    </ligand>
</feature>
<comment type="catalytic activity">
    <reaction evidence="1">
        <text>(S)-2,3,4,5-tetrahydrodipicolinate + succinyl-CoA + H2O = (S)-2-succinylamino-6-oxoheptanedioate + CoA</text>
        <dbReference type="Rhea" id="RHEA:17325"/>
        <dbReference type="ChEBI" id="CHEBI:15377"/>
        <dbReference type="ChEBI" id="CHEBI:15685"/>
        <dbReference type="ChEBI" id="CHEBI:16845"/>
        <dbReference type="ChEBI" id="CHEBI:57287"/>
        <dbReference type="ChEBI" id="CHEBI:57292"/>
        <dbReference type="EC" id="2.3.1.117"/>
    </reaction>
</comment>
<comment type="pathway">
    <text evidence="1">Amino-acid biosynthesis; L-lysine biosynthesis via DAP pathway; LL-2,6-diaminopimelate from (S)-tetrahydrodipicolinate (succinylase route): step 1/3.</text>
</comment>
<comment type="subunit">
    <text evidence="1">Homotrimer.</text>
</comment>
<comment type="subcellular location">
    <subcellularLocation>
        <location evidence="1">Cytoplasm</location>
    </subcellularLocation>
</comment>
<comment type="similarity">
    <text evidence="1">Belongs to the transferase hexapeptide repeat family.</text>
</comment>
<keyword id="KW-0012">Acyltransferase</keyword>
<keyword id="KW-0028">Amino-acid biosynthesis</keyword>
<keyword id="KW-0963">Cytoplasm</keyword>
<keyword id="KW-0220">Diaminopimelate biosynthesis</keyword>
<keyword id="KW-0457">Lysine biosynthesis</keyword>
<keyword id="KW-0677">Repeat</keyword>
<keyword id="KW-0808">Transferase</keyword>
<name>DAPD_BURL3</name>
<reference key="1">
    <citation type="submission" date="2005-10" db="EMBL/GenBank/DDBJ databases">
        <title>Complete sequence of chromosome 1 of Burkholderia sp. 383.</title>
        <authorList>
            <consortium name="US DOE Joint Genome Institute"/>
            <person name="Copeland A."/>
            <person name="Lucas S."/>
            <person name="Lapidus A."/>
            <person name="Barry K."/>
            <person name="Detter J.C."/>
            <person name="Glavina T."/>
            <person name="Hammon N."/>
            <person name="Israni S."/>
            <person name="Pitluck S."/>
            <person name="Chain P."/>
            <person name="Malfatti S."/>
            <person name="Shin M."/>
            <person name="Vergez L."/>
            <person name="Schmutz J."/>
            <person name="Larimer F."/>
            <person name="Land M."/>
            <person name="Kyrpides N."/>
            <person name="Lykidis A."/>
            <person name="Richardson P."/>
        </authorList>
    </citation>
    <scope>NUCLEOTIDE SEQUENCE [LARGE SCALE GENOMIC DNA]</scope>
    <source>
        <strain>ATCC 17760 / DSM 23089 / LMG 22485 / NCIMB 9086 / R18194 / 383</strain>
    </source>
</reference>
<protein>
    <recommendedName>
        <fullName evidence="1">2,3,4,5-tetrahydropyridine-2,6-dicarboxylate N-succinyltransferase</fullName>
        <ecNumber evidence="1">2.3.1.117</ecNumber>
    </recommendedName>
    <alternativeName>
        <fullName evidence="1">Tetrahydrodipicolinate N-succinyltransferase</fullName>
        <shortName evidence="1">THDP succinyltransferase</shortName>
        <shortName evidence="1">THP succinyltransferase</shortName>
        <shortName evidence="1">Tetrahydropicolinate succinylase</shortName>
    </alternativeName>
</protein>
<proteinExistence type="inferred from homology"/>